<comment type="function">
    <text evidence="2">Plays redundant role with PV42a in regulating male gametogenesis and pollen tube guidance.</text>
</comment>
<comment type="tissue specificity">
    <text evidence="2">Expressed highly in rosette leaves, cauline leaves, open flowers, developing siliques and dry seeds, but at a low level in stems and floral buds.</text>
</comment>
<comment type="disruption phenotype">
    <text evidence="2">No visible phenotype; probably due to a complementation by PV42b. Shorter siliques and reduced seed sets in pv42a and pv42b RNAi double mutant.</text>
</comment>
<comment type="similarity">
    <text evidence="3">Belongs to the 5'-AMP-activated protein kinase gamma subunit family.</text>
</comment>
<comment type="sequence caution" evidence="3">
    <conflict type="erroneous gene model prediction">
        <sequence resource="EMBL-CDS" id="AAD55486"/>
    </conflict>
</comment>
<feature type="chain" id="PRO_0000403989" description="SNF1-related protein kinase regulatory subunit gamma-like PV42b">
    <location>
        <begin position="1"/>
        <end position="357"/>
    </location>
</feature>
<feature type="domain" description="CBS 1" evidence="1">
    <location>
        <begin position="16"/>
        <end position="97"/>
    </location>
</feature>
<feature type="domain" description="CBS 2" evidence="1">
    <location>
        <begin position="113"/>
        <end position="185"/>
    </location>
</feature>
<feature type="domain" description="CBS 3" evidence="1">
    <location>
        <begin position="198"/>
        <end position="273"/>
    </location>
</feature>
<feature type="domain" description="CBS 4" evidence="1">
    <location>
        <begin position="293"/>
        <end position="351"/>
    </location>
</feature>
<gene>
    <name type="primary">PV42B</name>
    <name type="synonym">CBSX4</name>
    <name type="ordered locus">At1g80090</name>
    <name type="ORF">F18B13.17</name>
    <name type="ORF">F18B13.42</name>
</gene>
<dbReference type="EMBL" id="AC009322">
    <property type="protein sequence ID" value="AAD55486.1"/>
    <property type="status" value="ALT_SEQ"/>
    <property type="molecule type" value="Genomic_DNA"/>
</dbReference>
<dbReference type="EMBL" id="CP002684">
    <property type="protein sequence ID" value="AEE36355.2"/>
    <property type="molecule type" value="Genomic_DNA"/>
</dbReference>
<dbReference type="EMBL" id="AK118213">
    <property type="protein sequence ID" value="BAC42835.1"/>
    <property type="molecule type" value="mRNA"/>
</dbReference>
<dbReference type="PIR" id="D96832">
    <property type="entry name" value="D96832"/>
</dbReference>
<dbReference type="RefSeq" id="NP_001319425.1">
    <property type="nucleotide sequence ID" value="NM_001334956.1"/>
</dbReference>
<dbReference type="SMR" id="Q8GXI9"/>
<dbReference type="FunCoup" id="Q8GXI9">
    <property type="interactions" value="42"/>
</dbReference>
<dbReference type="STRING" id="3702.Q8GXI9"/>
<dbReference type="GlyGen" id="Q8GXI9">
    <property type="glycosylation" value="1 site"/>
</dbReference>
<dbReference type="PaxDb" id="3702-AT1G80090.1"/>
<dbReference type="ProteomicsDB" id="236544"/>
<dbReference type="EnsemblPlants" id="AT1G80090.1">
    <property type="protein sequence ID" value="AT1G80090.1"/>
    <property type="gene ID" value="AT1G80090"/>
</dbReference>
<dbReference type="GeneID" id="844349"/>
<dbReference type="Gramene" id="AT1G80090.1">
    <property type="protein sequence ID" value="AT1G80090.1"/>
    <property type="gene ID" value="AT1G80090"/>
</dbReference>
<dbReference type="KEGG" id="ath:AT1G80090"/>
<dbReference type="Araport" id="AT1G80090"/>
<dbReference type="TAIR" id="AT1G80090">
    <property type="gene designation" value="CBSX4"/>
</dbReference>
<dbReference type="eggNOG" id="KOG1764">
    <property type="taxonomic scope" value="Eukaryota"/>
</dbReference>
<dbReference type="HOGENOM" id="CLU_062724_0_0_1"/>
<dbReference type="InParanoid" id="Q8GXI9"/>
<dbReference type="OMA" id="CIKPMAN"/>
<dbReference type="PhylomeDB" id="Q8GXI9"/>
<dbReference type="PRO" id="PR:Q8GXI9"/>
<dbReference type="Proteomes" id="UP000006548">
    <property type="component" value="Chromosome 1"/>
</dbReference>
<dbReference type="ExpressionAtlas" id="Q8GXI9">
    <property type="expression patterns" value="baseline and differential"/>
</dbReference>
<dbReference type="GO" id="GO:0009553">
    <property type="term" value="P:embryo sac development"/>
    <property type="evidence" value="ECO:0000315"/>
    <property type="project" value="UniProtKB"/>
</dbReference>
<dbReference type="GO" id="GO:0048443">
    <property type="term" value="P:stamen development"/>
    <property type="evidence" value="ECO:0000315"/>
    <property type="project" value="UniProtKB"/>
</dbReference>
<dbReference type="Gene3D" id="3.10.580.10">
    <property type="entry name" value="CBS-domain"/>
    <property type="match status" value="2"/>
</dbReference>
<dbReference type="InterPro" id="IPR050511">
    <property type="entry name" value="AMPK_gamma/SDS23_families"/>
</dbReference>
<dbReference type="InterPro" id="IPR000644">
    <property type="entry name" value="CBS_dom"/>
</dbReference>
<dbReference type="InterPro" id="IPR046342">
    <property type="entry name" value="CBS_dom_sf"/>
</dbReference>
<dbReference type="PANTHER" id="PTHR13780">
    <property type="entry name" value="AMP-ACTIVATED PROTEIN KINASE, GAMMA REGULATORY SUBUNIT"/>
    <property type="match status" value="1"/>
</dbReference>
<dbReference type="PANTHER" id="PTHR13780:SF102">
    <property type="entry name" value="SNF1-RELATED PROTEIN KINASE REGULATORY SUBUNIT GAMMA-LIKE PV42B"/>
    <property type="match status" value="1"/>
</dbReference>
<dbReference type="Pfam" id="PF00571">
    <property type="entry name" value="CBS"/>
    <property type="match status" value="2"/>
</dbReference>
<dbReference type="SMART" id="SM00116">
    <property type="entry name" value="CBS"/>
    <property type="match status" value="3"/>
</dbReference>
<dbReference type="SUPFAM" id="SSF54631">
    <property type="entry name" value="CBS-domain pair"/>
    <property type="match status" value="2"/>
</dbReference>
<dbReference type="PROSITE" id="PS51371">
    <property type="entry name" value="CBS"/>
    <property type="match status" value="3"/>
</dbReference>
<reference key="1">
    <citation type="journal article" date="2000" name="Nature">
        <title>Sequence and analysis of chromosome 1 of the plant Arabidopsis thaliana.</title>
        <authorList>
            <person name="Theologis A."/>
            <person name="Ecker J.R."/>
            <person name="Palm C.J."/>
            <person name="Federspiel N.A."/>
            <person name="Kaul S."/>
            <person name="White O."/>
            <person name="Alonso J."/>
            <person name="Altafi H."/>
            <person name="Araujo R."/>
            <person name="Bowman C.L."/>
            <person name="Brooks S.Y."/>
            <person name="Buehler E."/>
            <person name="Chan A."/>
            <person name="Chao Q."/>
            <person name="Chen H."/>
            <person name="Cheuk R.F."/>
            <person name="Chin C.W."/>
            <person name="Chung M.K."/>
            <person name="Conn L."/>
            <person name="Conway A.B."/>
            <person name="Conway A.R."/>
            <person name="Creasy T.H."/>
            <person name="Dewar K."/>
            <person name="Dunn P."/>
            <person name="Etgu P."/>
            <person name="Feldblyum T.V."/>
            <person name="Feng J.-D."/>
            <person name="Fong B."/>
            <person name="Fujii C.Y."/>
            <person name="Gill J.E."/>
            <person name="Goldsmith A.D."/>
            <person name="Haas B."/>
            <person name="Hansen N.F."/>
            <person name="Hughes B."/>
            <person name="Huizar L."/>
            <person name="Hunter J.L."/>
            <person name="Jenkins J."/>
            <person name="Johnson-Hopson C."/>
            <person name="Khan S."/>
            <person name="Khaykin E."/>
            <person name="Kim C.J."/>
            <person name="Koo H.L."/>
            <person name="Kremenetskaia I."/>
            <person name="Kurtz D.B."/>
            <person name="Kwan A."/>
            <person name="Lam B."/>
            <person name="Langin-Hooper S."/>
            <person name="Lee A."/>
            <person name="Lee J.M."/>
            <person name="Lenz C.A."/>
            <person name="Li J.H."/>
            <person name="Li Y.-P."/>
            <person name="Lin X."/>
            <person name="Liu S.X."/>
            <person name="Liu Z.A."/>
            <person name="Luros J.S."/>
            <person name="Maiti R."/>
            <person name="Marziali A."/>
            <person name="Militscher J."/>
            <person name="Miranda M."/>
            <person name="Nguyen M."/>
            <person name="Nierman W.C."/>
            <person name="Osborne B.I."/>
            <person name="Pai G."/>
            <person name="Peterson J."/>
            <person name="Pham P.K."/>
            <person name="Rizzo M."/>
            <person name="Rooney T."/>
            <person name="Rowley D."/>
            <person name="Sakano H."/>
            <person name="Salzberg S.L."/>
            <person name="Schwartz J.R."/>
            <person name="Shinn P."/>
            <person name="Southwick A.M."/>
            <person name="Sun H."/>
            <person name="Tallon L.J."/>
            <person name="Tambunga G."/>
            <person name="Toriumi M.J."/>
            <person name="Town C.D."/>
            <person name="Utterback T."/>
            <person name="Van Aken S."/>
            <person name="Vaysberg M."/>
            <person name="Vysotskaia V.S."/>
            <person name="Walker M."/>
            <person name="Wu D."/>
            <person name="Yu G."/>
            <person name="Fraser C.M."/>
            <person name="Venter J.C."/>
            <person name="Davis R.W."/>
        </authorList>
    </citation>
    <scope>NUCLEOTIDE SEQUENCE [LARGE SCALE GENOMIC DNA]</scope>
    <source>
        <strain>cv. Columbia</strain>
    </source>
</reference>
<reference key="2">
    <citation type="journal article" date="2017" name="Plant J.">
        <title>Araport11: a complete reannotation of the Arabidopsis thaliana reference genome.</title>
        <authorList>
            <person name="Cheng C.Y."/>
            <person name="Krishnakumar V."/>
            <person name="Chan A.P."/>
            <person name="Thibaud-Nissen F."/>
            <person name="Schobel S."/>
            <person name="Town C.D."/>
        </authorList>
    </citation>
    <scope>GENOME REANNOTATION</scope>
    <source>
        <strain>cv. Columbia</strain>
    </source>
</reference>
<reference key="3">
    <citation type="journal article" date="2002" name="Science">
        <title>Functional annotation of a full-length Arabidopsis cDNA collection.</title>
        <authorList>
            <person name="Seki M."/>
            <person name="Narusaka M."/>
            <person name="Kamiya A."/>
            <person name="Ishida J."/>
            <person name="Satou M."/>
            <person name="Sakurai T."/>
            <person name="Nakajima M."/>
            <person name="Enju A."/>
            <person name="Akiyama K."/>
            <person name="Oono Y."/>
            <person name="Muramatsu M."/>
            <person name="Hayashizaki Y."/>
            <person name="Kawai J."/>
            <person name="Carninci P."/>
            <person name="Itoh M."/>
            <person name="Ishii Y."/>
            <person name="Arakawa T."/>
            <person name="Shibata K."/>
            <person name="Shinagawa A."/>
            <person name="Shinozaki K."/>
        </authorList>
    </citation>
    <scope>NUCLEOTIDE SEQUENCE [LARGE SCALE MRNA]</scope>
    <source>
        <strain>cv. Columbia</strain>
    </source>
</reference>
<reference key="4">
    <citation type="journal article" date="2009" name="BMC Genomics">
        <title>Genome wide expression analysis of CBS domain containing proteins in Arabidopsis thaliana (L.) Heynh and Oryza sativa L. reveals their developmental and stress regulation.</title>
        <authorList>
            <person name="Kushwaha H.R."/>
            <person name="Singh A.K."/>
            <person name="Sopory S.K."/>
            <person name="Singla-Pareek S.L."/>
            <person name="Pareek A."/>
        </authorList>
    </citation>
    <scope>GENE FAMILY</scope>
    <scope>NOMENCLATURE</scope>
</reference>
<reference key="5">
    <citation type="journal article" date="2011" name="PLoS ONE">
        <title>AtPV42a and AtPV42b redundantly regulate reproductive development in Arabidopsis thaliana.</title>
        <authorList>
            <person name="Fang L."/>
            <person name="Hou X."/>
            <person name="Lee L.Y."/>
            <person name="Liu L."/>
            <person name="Yan X."/>
            <person name="Yu H."/>
        </authorList>
    </citation>
    <scope>FUNCTION</scope>
    <scope>DISRUPTION PHENOTYPE</scope>
    <scope>TISSUE SPECIFICITY</scope>
</reference>
<name>PV42B_ARATH</name>
<proteinExistence type="evidence at transcript level"/>
<protein>
    <recommendedName>
        <fullName>SNF1-related protein kinase regulatory subunit gamma-like PV42b</fullName>
        <shortName>AtPV42b</shortName>
    </recommendedName>
    <alternativeName>
        <fullName>AKIN subunit gamma-like PV42b</fullName>
    </alternativeName>
    <alternativeName>
        <fullName>CBS domain-containing protein CBSX4</fullName>
    </alternativeName>
</protein>
<sequence>MQSYSRLMQFKVKDLMIDKRRLVEVPDNATLGDALNTMVANRVRAVPVAAKPGQWLGAGGSMIVELDKQSGSARKQYIGMVTMLDVVAHIAGDDGESGLDKKMAAPVSSIIGHCPEGLSLWSLNPNTSIMDCMEMLSKGIHRVLVPLDSNTENITGPELVESASAYAMLSQMDLISFFFDQSSQLHGILSHTVTDLSAIHNTVLALTSQARVKDAIQCMSIAMLNAVPIVEASGEGEDHKQLVDGKNRRVVGTFSASDLKGCHLATLRSWLPLNALEFVEKIPRTLLFTAATSTPGRELVTCHVTSTLAQVIHMVTTKRVHRVWVVDQNGGLQGLVSLTDIIAVVRSALLSGAPDLF</sequence>
<accession>Q8GXI9</accession>
<accession>F4HS24</accession>
<accession>Q9SSD0</accession>
<keyword id="KW-0129">CBS domain</keyword>
<keyword id="KW-1185">Reference proteome</keyword>
<keyword id="KW-0677">Repeat</keyword>
<organism>
    <name type="scientific">Arabidopsis thaliana</name>
    <name type="common">Mouse-ear cress</name>
    <dbReference type="NCBI Taxonomy" id="3702"/>
    <lineage>
        <taxon>Eukaryota</taxon>
        <taxon>Viridiplantae</taxon>
        <taxon>Streptophyta</taxon>
        <taxon>Embryophyta</taxon>
        <taxon>Tracheophyta</taxon>
        <taxon>Spermatophyta</taxon>
        <taxon>Magnoliopsida</taxon>
        <taxon>eudicotyledons</taxon>
        <taxon>Gunneridae</taxon>
        <taxon>Pentapetalae</taxon>
        <taxon>rosids</taxon>
        <taxon>malvids</taxon>
        <taxon>Brassicales</taxon>
        <taxon>Brassicaceae</taxon>
        <taxon>Camelineae</taxon>
        <taxon>Arabidopsis</taxon>
    </lineage>
</organism>
<evidence type="ECO:0000255" key="1">
    <source>
        <dbReference type="PROSITE-ProRule" id="PRU00703"/>
    </source>
</evidence>
<evidence type="ECO:0000269" key="2">
    <source>
    </source>
</evidence>
<evidence type="ECO:0000305" key="3"/>